<comment type="function">
    <text evidence="1">Venom tetrapeptide that inhibits activities of the human peptidase neprilysin (NEP/MME) (Ki=0.94 uM), the two mammalian endopeptidases EP24.16 and EP24.15 (Ki=36 uM and 74 uM, respectively), and a probable cockroach neprilysin-like protein. It shows 3-fold better inhibitory activity than proctolin. It may play a role in human envenomation as well as in the paralysis and death of scorpion preys. It does not inhibit ACE activity.</text>
</comment>
<comment type="subcellular location">
    <subcellularLocation>
        <location evidence="1">Secreted</location>
    </subcellularLocation>
</comment>
<comment type="tissue specificity">
    <text evidence="3">Expressed by the venom gland.</text>
</comment>
<comment type="miscellaneous">
    <text evidence="1">Is a stable peptide that is not originated from proctolin hydrolysis.</text>
</comment>
<organism>
    <name type="scientific">Tityus serrulatus</name>
    <name type="common">Brazilian scorpion</name>
    <dbReference type="NCBI Taxonomy" id="6887"/>
    <lineage>
        <taxon>Eukaryota</taxon>
        <taxon>Metazoa</taxon>
        <taxon>Ecdysozoa</taxon>
        <taxon>Arthropoda</taxon>
        <taxon>Chelicerata</taxon>
        <taxon>Arachnida</taxon>
        <taxon>Scorpiones</taxon>
        <taxon>Buthida</taxon>
        <taxon>Buthoidea</taxon>
        <taxon>Buthidae</taxon>
        <taxon>Tityus</taxon>
    </lineage>
</organism>
<dbReference type="GO" id="GO:0005576">
    <property type="term" value="C:extracellular region"/>
    <property type="evidence" value="ECO:0007669"/>
    <property type="project" value="UniProtKB-SubCell"/>
</dbReference>
<dbReference type="GO" id="GO:0030414">
    <property type="term" value="F:peptidase inhibitor activity"/>
    <property type="evidence" value="ECO:0007669"/>
    <property type="project" value="UniProtKB-KW"/>
</dbReference>
<protein>
    <recommendedName>
        <fullName evidence="2">[des-Arg1]-proctolin</fullName>
    </recommendedName>
    <alternativeName>
        <fullName evidence="2">NEP-inhibiting peptide</fullName>
    </alternativeName>
</protein>
<keyword id="KW-0903">Direct protein sequencing</keyword>
<keyword id="KW-0646">Protease inhibitor</keyword>
<keyword id="KW-0964">Secreted</keyword>
<sequence>YLPT</sequence>
<name>PRCT_TITSE</name>
<evidence type="ECO:0000269" key="1">
    <source>
    </source>
</evidence>
<evidence type="ECO:0000303" key="2">
    <source>
    </source>
</evidence>
<evidence type="ECO:0000305" key="3">
    <source>
    </source>
</evidence>
<accession>P0DUS0</accession>
<proteinExistence type="evidence at protein level"/>
<feature type="peptide" id="PRO_0000453390" description="[des-Arg1]-proctolin" evidence="1">
    <location>
        <begin position="1"/>
        <end position="4"/>
    </location>
</feature>
<reference key="1">
    <citation type="journal article" date="2016" name="Peptides">
        <title>[des-Arg(1)]-proctolin: a novel NEP-like enzyme inhibitor identified in Tityus serrulatus venom.</title>
        <authorList>
            <person name="Duzzi B."/>
            <person name="Cajado-Carvalho D."/>
            <person name="Kuniyoshi A.K."/>
            <person name="Kodama R.T."/>
            <person name="Gozzo F.C."/>
            <person name="Fioramonte M."/>
            <person name="Tambourgi D.V."/>
            <person name="Portaro F.V."/>
            <person name="Rioli V."/>
        </authorList>
    </citation>
    <scope>PROTEIN SEQUENCE</scope>
    <scope>FUNCTION</scope>
    <scope>SUBCELLULAR LOCATION</scope>
    <scope>SYNTHESIS</scope>
    <source>
        <tissue>Venom</tissue>
    </source>
</reference>